<gene>
    <name type="primary">Ogfod3</name>
</gene>
<reference key="1">
    <citation type="journal article" date="2005" name="Science">
        <title>The transcriptional landscape of the mammalian genome.</title>
        <authorList>
            <person name="Carninci P."/>
            <person name="Kasukawa T."/>
            <person name="Katayama S."/>
            <person name="Gough J."/>
            <person name="Frith M.C."/>
            <person name="Maeda N."/>
            <person name="Oyama R."/>
            <person name="Ravasi T."/>
            <person name="Lenhard B."/>
            <person name="Wells C."/>
            <person name="Kodzius R."/>
            <person name="Shimokawa K."/>
            <person name="Bajic V.B."/>
            <person name="Brenner S.E."/>
            <person name="Batalov S."/>
            <person name="Forrest A.R."/>
            <person name="Zavolan M."/>
            <person name="Davis M.J."/>
            <person name="Wilming L.G."/>
            <person name="Aidinis V."/>
            <person name="Allen J.E."/>
            <person name="Ambesi-Impiombato A."/>
            <person name="Apweiler R."/>
            <person name="Aturaliya R.N."/>
            <person name="Bailey T.L."/>
            <person name="Bansal M."/>
            <person name="Baxter L."/>
            <person name="Beisel K.W."/>
            <person name="Bersano T."/>
            <person name="Bono H."/>
            <person name="Chalk A.M."/>
            <person name="Chiu K.P."/>
            <person name="Choudhary V."/>
            <person name="Christoffels A."/>
            <person name="Clutterbuck D.R."/>
            <person name="Crowe M.L."/>
            <person name="Dalla E."/>
            <person name="Dalrymple B.P."/>
            <person name="de Bono B."/>
            <person name="Della Gatta G."/>
            <person name="di Bernardo D."/>
            <person name="Down T."/>
            <person name="Engstrom P."/>
            <person name="Fagiolini M."/>
            <person name="Faulkner G."/>
            <person name="Fletcher C.F."/>
            <person name="Fukushima T."/>
            <person name="Furuno M."/>
            <person name="Futaki S."/>
            <person name="Gariboldi M."/>
            <person name="Georgii-Hemming P."/>
            <person name="Gingeras T.R."/>
            <person name="Gojobori T."/>
            <person name="Green R.E."/>
            <person name="Gustincich S."/>
            <person name="Harbers M."/>
            <person name="Hayashi Y."/>
            <person name="Hensch T.K."/>
            <person name="Hirokawa N."/>
            <person name="Hill D."/>
            <person name="Huminiecki L."/>
            <person name="Iacono M."/>
            <person name="Ikeo K."/>
            <person name="Iwama A."/>
            <person name="Ishikawa T."/>
            <person name="Jakt M."/>
            <person name="Kanapin A."/>
            <person name="Katoh M."/>
            <person name="Kawasawa Y."/>
            <person name="Kelso J."/>
            <person name="Kitamura H."/>
            <person name="Kitano H."/>
            <person name="Kollias G."/>
            <person name="Krishnan S.P."/>
            <person name="Kruger A."/>
            <person name="Kummerfeld S.K."/>
            <person name="Kurochkin I.V."/>
            <person name="Lareau L.F."/>
            <person name="Lazarevic D."/>
            <person name="Lipovich L."/>
            <person name="Liu J."/>
            <person name="Liuni S."/>
            <person name="McWilliam S."/>
            <person name="Madan Babu M."/>
            <person name="Madera M."/>
            <person name="Marchionni L."/>
            <person name="Matsuda H."/>
            <person name="Matsuzawa S."/>
            <person name="Miki H."/>
            <person name="Mignone F."/>
            <person name="Miyake S."/>
            <person name="Morris K."/>
            <person name="Mottagui-Tabar S."/>
            <person name="Mulder N."/>
            <person name="Nakano N."/>
            <person name="Nakauchi H."/>
            <person name="Ng P."/>
            <person name="Nilsson R."/>
            <person name="Nishiguchi S."/>
            <person name="Nishikawa S."/>
            <person name="Nori F."/>
            <person name="Ohara O."/>
            <person name="Okazaki Y."/>
            <person name="Orlando V."/>
            <person name="Pang K.C."/>
            <person name="Pavan W.J."/>
            <person name="Pavesi G."/>
            <person name="Pesole G."/>
            <person name="Petrovsky N."/>
            <person name="Piazza S."/>
            <person name="Reed J."/>
            <person name="Reid J.F."/>
            <person name="Ring B.Z."/>
            <person name="Ringwald M."/>
            <person name="Rost B."/>
            <person name="Ruan Y."/>
            <person name="Salzberg S.L."/>
            <person name="Sandelin A."/>
            <person name="Schneider C."/>
            <person name="Schoenbach C."/>
            <person name="Sekiguchi K."/>
            <person name="Semple C.A."/>
            <person name="Seno S."/>
            <person name="Sessa L."/>
            <person name="Sheng Y."/>
            <person name="Shibata Y."/>
            <person name="Shimada H."/>
            <person name="Shimada K."/>
            <person name="Silva D."/>
            <person name="Sinclair B."/>
            <person name="Sperling S."/>
            <person name="Stupka E."/>
            <person name="Sugiura K."/>
            <person name="Sultana R."/>
            <person name="Takenaka Y."/>
            <person name="Taki K."/>
            <person name="Tammoja K."/>
            <person name="Tan S.L."/>
            <person name="Tang S."/>
            <person name="Taylor M.S."/>
            <person name="Tegner J."/>
            <person name="Teichmann S.A."/>
            <person name="Ueda H.R."/>
            <person name="van Nimwegen E."/>
            <person name="Verardo R."/>
            <person name="Wei C.L."/>
            <person name="Yagi K."/>
            <person name="Yamanishi H."/>
            <person name="Zabarovsky E."/>
            <person name="Zhu S."/>
            <person name="Zimmer A."/>
            <person name="Hide W."/>
            <person name="Bult C."/>
            <person name="Grimmond S.M."/>
            <person name="Teasdale R.D."/>
            <person name="Liu E.T."/>
            <person name="Brusic V."/>
            <person name="Quackenbush J."/>
            <person name="Wahlestedt C."/>
            <person name="Mattick J.S."/>
            <person name="Hume D.A."/>
            <person name="Kai C."/>
            <person name="Sasaki D."/>
            <person name="Tomaru Y."/>
            <person name="Fukuda S."/>
            <person name="Kanamori-Katayama M."/>
            <person name="Suzuki M."/>
            <person name="Aoki J."/>
            <person name="Arakawa T."/>
            <person name="Iida J."/>
            <person name="Imamura K."/>
            <person name="Itoh M."/>
            <person name="Kato T."/>
            <person name="Kawaji H."/>
            <person name="Kawagashira N."/>
            <person name="Kawashima T."/>
            <person name="Kojima M."/>
            <person name="Kondo S."/>
            <person name="Konno H."/>
            <person name="Nakano K."/>
            <person name="Ninomiya N."/>
            <person name="Nishio T."/>
            <person name="Okada M."/>
            <person name="Plessy C."/>
            <person name="Shibata K."/>
            <person name="Shiraki T."/>
            <person name="Suzuki S."/>
            <person name="Tagami M."/>
            <person name="Waki K."/>
            <person name="Watahiki A."/>
            <person name="Okamura-Oho Y."/>
            <person name="Suzuki H."/>
            <person name="Kawai J."/>
            <person name="Hayashizaki Y."/>
        </authorList>
    </citation>
    <scope>NUCLEOTIDE SEQUENCE [LARGE SCALE MRNA]</scope>
    <source>
        <strain>BALB/cJ</strain>
        <strain>C57BL/6J</strain>
        <tissue>Embryo</tissue>
        <tissue>Placenta</tissue>
    </source>
</reference>
<reference key="2">
    <citation type="journal article" date="2004" name="Genome Res.">
        <title>The status, quality, and expansion of the NIH full-length cDNA project: the Mammalian Gene Collection (MGC).</title>
        <authorList>
            <consortium name="The MGC Project Team"/>
        </authorList>
    </citation>
    <scope>NUCLEOTIDE SEQUENCE [LARGE SCALE MRNA]</scope>
    <source>
        <strain>FVB/N</strain>
        <tissue>Kidney</tissue>
    </source>
</reference>
<proteinExistence type="evidence at transcript level"/>
<organism>
    <name type="scientific">Mus musculus</name>
    <name type="common">Mouse</name>
    <dbReference type="NCBI Taxonomy" id="10090"/>
    <lineage>
        <taxon>Eukaryota</taxon>
        <taxon>Metazoa</taxon>
        <taxon>Chordata</taxon>
        <taxon>Craniata</taxon>
        <taxon>Vertebrata</taxon>
        <taxon>Euteleostomi</taxon>
        <taxon>Mammalia</taxon>
        <taxon>Eutheria</taxon>
        <taxon>Euarchontoglires</taxon>
        <taxon>Glires</taxon>
        <taxon>Rodentia</taxon>
        <taxon>Myomorpha</taxon>
        <taxon>Muroidea</taxon>
        <taxon>Muridae</taxon>
        <taxon>Murinae</taxon>
        <taxon>Mus</taxon>
        <taxon>Mus</taxon>
    </lineage>
</organism>
<sequence length="315" mass="35385">MAPQRRGPPRIPEGSSAAERRRATSTKKDRLPREAQRTWLRIVAFGVGLALVTCLLWSSVGIDDDVAEVVARRGEVLEGRFIEVPCSEDYDGHRRFEGCTPRKCGRGVTDIVITREEAEQIRRIAEKGLSLGGSDGGASILDLHSGALSVGKHFVNLYRYFGDKIQNIFSEEDFQLYRDIRQKVQLTIAEAFGISASLLYLTKPTFFSRINSTEARTAHDEYWHAHVDKVTYGSFDYTSLLYLSDYLEDFGGGRFVFMEEGSNKTVEPRAGRVSFFTSGSENLHRVEKVLWGTRYAITIAFTCNPDHGIEDPVLT</sequence>
<name>OGFD3_MOUSE</name>
<protein>
    <recommendedName>
        <fullName>2-oxoglutarate and iron-dependent oxygenase domain-containing protein 3</fullName>
        <ecNumber>1.14.11.-</ecNumber>
    </recommendedName>
</protein>
<evidence type="ECO:0000250" key="1"/>
<evidence type="ECO:0000255" key="2"/>
<evidence type="ECO:0000255" key="3">
    <source>
        <dbReference type="PROSITE-ProRule" id="PRU00805"/>
    </source>
</evidence>
<evidence type="ECO:0000256" key="4">
    <source>
        <dbReference type="SAM" id="MobiDB-lite"/>
    </source>
</evidence>
<evidence type="ECO:0000305" key="5"/>
<dbReference type="EC" id="1.14.11.-"/>
<dbReference type="EMBL" id="AK004005">
    <property type="protein sequence ID" value="BAB23119.1"/>
    <property type="molecule type" value="mRNA"/>
</dbReference>
<dbReference type="EMBL" id="AK145938">
    <property type="protein sequence ID" value="BAE26768.1"/>
    <property type="molecule type" value="mRNA"/>
</dbReference>
<dbReference type="EMBL" id="AK168300">
    <property type="protein sequence ID" value="BAE40241.1"/>
    <property type="molecule type" value="mRNA"/>
</dbReference>
<dbReference type="EMBL" id="BC024349">
    <property type="protein sequence ID" value="AAH24349.1"/>
    <property type="molecule type" value="mRNA"/>
</dbReference>
<dbReference type="CCDS" id="CCDS25770.1"/>
<dbReference type="RefSeq" id="NP_079678.1">
    <property type="nucleotide sequence ID" value="NM_025402.2"/>
</dbReference>
<dbReference type="SMR" id="Q9D136"/>
<dbReference type="FunCoup" id="Q9D136">
    <property type="interactions" value="321"/>
</dbReference>
<dbReference type="STRING" id="10090.ENSMUSP00000026169"/>
<dbReference type="GlyConnect" id="2097">
    <property type="glycosylation" value="1 N-Linked glycan (1 site)"/>
</dbReference>
<dbReference type="GlyCosmos" id="Q9D136">
    <property type="glycosylation" value="2 sites, 1 glycan"/>
</dbReference>
<dbReference type="GlyGen" id="Q9D136">
    <property type="glycosylation" value="2 sites, 2 N-linked glycans (2 sites)"/>
</dbReference>
<dbReference type="iPTMnet" id="Q9D136"/>
<dbReference type="PhosphoSitePlus" id="Q9D136"/>
<dbReference type="PaxDb" id="10090-ENSMUSP00000026169"/>
<dbReference type="PeptideAtlas" id="Q9D136"/>
<dbReference type="ProteomicsDB" id="293930"/>
<dbReference type="Pumba" id="Q9D136"/>
<dbReference type="Antibodypedia" id="63655">
    <property type="antibodies" value="15 antibodies from 8 providers"/>
</dbReference>
<dbReference type="DNASU" id="66179"/>
<dbReference type="Ensembl" id="ENSMUST00000026169.7">
    <property type="protein sequence ID" value="ENSMUSP00000026169.7"/>
    <property type="gene ID" value="ENSMUSG00000025169.7"/>
</dbReference>
<dbReference type="GeneID" id="66179"/>
<dbReference type="KEGG" id="mmu:66179"/>
<dbReference type="UCSC" id="uc007mvk.1">
    <property type="organism name" value="mouse"/>
</dbReference>
<dbReference type="AGR" id="MGI:1913429"/>
<dbReference type="CTD" id="79701"/>
<dbReference type="MGI" id="MGI:1913429">
    <property type="gene designation" value="Ogfod3"/>
</dbReference>
<dbReference type="VEuPathDB" id="HostDB:ENSMUSG00000025169"/>
<dbReference type="eggNOG" id="ENOG502QR2P">
    <property type="taxonomic scope" value="Eukaryota"/>
</dbReference>
<dbReference type="GeneTree" id="ENSGT00390000005895"/>
<dbReference type="HOGENOM" id="CLU_042482_0_0_1"/>
<dbReference type="InParanoid" id="Q9D136"/>
<dbReference type="OMA" id="YESFHYT"/>
<dbReference type="OrthoDB" id="427071at2759"/>
<dbReference type="PhylomeDB" id="Q9D136"/>
<dbReference type="TreeFam" id="TF329031"/>
<dbReference type="BioGRID-ORCS" id="66179">
    <property type="hits" value="1 hit in 76 CRISPR screens"/>
</dbReference>
<dbReference type="PRO" id="PR:Q9D136"/>
<dbReference type="Proteomes" id="UP000000589">
    <property type="component" value="Chromosome 11"/>
</dbReference>
<dbReference type="RNAct" id="Q9D136">
    <property type="molecule type" value="protein"/>
</dbReference>
<dbReference type="Bgee" id="ENSMUSG00000025169">
    <property type="expression patterns" value="Expressed in epithelium of lens and 230 other cell types or tissues"/>
</dbReference>
<dbReference type="GO" id="GO:0016020">
    <property type="term" value="C:membrane"/>
    <property type="evidence" value="ECO:0007669"/>
    <property type="project" value="UniProtKB-SubCell"/>
</dbReference>
<dbReference type="GO" id="GO:0051213">
    <property type="term" value="F:dioxygenase activity"/>
    <property type="evidence" value="ECO:0007669"/>
    <property type="project" value="UniProtKB-KW"/>
</dbReference>
<dbReference type="GO" id="GO:0005506">
    <property type="term" value="F:iron ion binding"/>
    <property type="evidence" value="ECO:0007669"/>
    <property type="project" value="InterPro"/>
</dbReference>
<dbReference type="GO" id="GO:0031418">
    <property type="term" value="F:L-ascorbic acid binding"/>
    <property type="evidence" value="ECO:0007669"/>
    <property type="project" value="UniProtKB-KW"/>
</dbReference>
<dbReference type="GO" id="GO:0016705">
    <property type="term" value="F:oxidoreductase activity, acting on paired donors, with incorporation or reduction of molecular oxygen"/>
    <property type="evidence" value="ECO:0007669"/>
    <property type="project" value="InterPro"/>
</dbReference>
<dbReference type="FunFam" id="2.60.120.620:FF:000019">
    <property type="entry name" value="2-oxoglutarate and iron-dependent oxygenase domain-containing protein 3"/>
    <property type="match status" value="1"/>
</dbReference>
<dbReference type="Gene3D" id="2.60.120.620">
    <property type="entry name" value="q2cbj1_9rhob like domain"/>
    <property type="match status" value="1"/>
</dbReference>
<dbReference type="InterPro" id="IPR039210">
    <property type="entry name" value="OGFOD3"/>
</dbReference>
<dbReference type="InterPro" id="IPR005123">
    <property type="entry name" value="Oxoglu/Fe-dep_dioxygenase_dom"/>
</dbReference>
<dbReference type="InterPro" id="IPR006620">
    <property type="entry name" value="Pro_4_hyd_alph"/>
</dbReference>
<dbReference type="InterPro" id="IPR044862">
    <property type="entry name" value="Pro_4_hyd_alph_FE2OG_OXY"/>
</dbReference>
<dbReference type="PANTHER" id="PTHR14650:SF1">
    <property type="entry name" value="2-OXOGLUTARATE AND IRON-DEPENDENT OXYGENASE DOMAIN-CONTAINING PROTEIN 3"/>
    <property type="match status" value="1"/>
</dbReference>
<dbReference type="PANTHER" id="PTHR14650">
    <property type="entry name" value="PROLYL HYDROXYLASE-RELATED"/>
    <property type="match status" value="1"/>
</dbReference>
<dbReference type="Pfam" id="PF13640">
    <property type="entry name" value="2OG-FeII_Oxy_3"/>
    <property type="match status" value="1"/>
</dbReference>
<dbReference type="SMART" id="SM00702">
    <property type="entry name" value="P4Hc"/>
    <property type="match status" value="1"/>
</dbReference>
<dbReference type="PROSITE" id="PS51471">
    <property type="entry name" value="FE2OG_OXY"/>
    <property type="match status" value="1"/>
</dbReference>
<feature type="chain" id="PRO_0000325886" description="2-oxoglutarate and iron-dependent oxygenase domain-containing protein 3">
    <location>
        <begin position="1"/>
        <end position="315"/>
    </location>
</feature>
<feature type="topological domain" description="Cytoplasmic" evidence="2">
    <location>
        <begin position="1"/>
        <end position="41"/>
    </location>
</feature>
<feature type="transmembrane region" description="Helical; Signal-anchor for type II membrane protein" evidence="2">
    <location>
        <begin position="42"/>
        <end position="62"/>
    </location>
</feature>
<feature type="topological domain" description="Lumenal" evidence="2">
    <location>
        <begin position="63"/>
        <end position="315"/>
    </location>
</feature>
<feature type="domain" description="Fe2OG dioxygenase" evidence="3">
    <location>
        <begin position="203"/>
        <end position="305"/>
    </location>
</feature>
<feature type="region of interest" description="Disordered" evidence="4">
    <location>
        <begin position="1"/>
        <end position="31"/>
    </location>
</feature>
<feature type="compositionally biased region" description="Basic and acidic residues" evidence="4">
    <location>
        <begin position="18"/>
        <end position="31"/>
    </location>
</feature>
<feature type="active site" evidence="2">
    <location>
        <position position="294"/>
    </location>
</feature>
<feature type="binding site" evidence="3">
    <location>
        <position position="226"/>
    </location>
    <ligand>
        <name>Fe cation</name>
        <dbReference type="ChEBI" id="CHEBI:24875"/>
    </ligand>
</feature>
<feature type="binding site" evidence="3">
    <location>
        <position position="228"/>
    </location>
    <ligand>
        <name>Fe cation</name>
        <dbReference type="ChEBI" id="CHEBI:24875"/>
    </ligand>
</feature>
<feature type="binding site" evidence="3">
    <location>
        <position position="284"/>
    </location>
    <ligand>
        <name>Fe cation</name>
        <dbReference type="ChEBI" id="CHEBI:24875"/>
    </ligand>
</feature>
<feature type="binding site" evidence="3">
    <location>
        <position position="294"/>
    </location>
    <ligand>
        <name>2-oxoglutarate</name>
        <dbReference type="ChEBI" id="CHEBI:16810"/>
    </ligand>
</feature>
<feature type="glycosylation site" description="N-linked (GlcNAc...) asparagine" evidence="2">
    <location>
        <position position="211"/>
    </location>
</feature>
<feature type="glycosylation site" description="N-linked (GlcNAc...) asparagine" evidence="2">
    <location>
        <position position="263"/>
    </location>
</feature>
<comment type="cofactor">
    <cofactor evidence="3">
        <name>Fe(2+)</name>
        <dbReference type="ChEBI" id="CHEBI:29033"/>
    </cofactor>
    <text evidence="3">Binds 1 Fe(2+) ion per subunit.</text>
</comment>
<comment type="cofactor">
    <cofactor evidence="1">
        <name>L-ascorbate</name>
        <dbReference type="ChEBI" id="CHEBI:38290"/>
    </cofactor>
</comment>
<comment type="subcellular location">
    <subcellularLocation>
        <location evidence="5">Membrane</location>
        <topology evidence="5">Single-pass type II membrane protein</topology>
    </subcellularLocation>
</comment>
<comment type="similarity">
    <text evidence="5">Belongs to the OGFOD3 family.</text>
</comment>
<keyword id="KW-0223">Dioxygenase</keyword>
<keyword id="KW-0325">Glycoprotein</keyword>
<keyword id="KW-0408">Iron</keyword>
<keyword id="KW-0472">Membrane</keyword>
<keyword id="KW-0479">Metal-binding</keyword>
<keyword id="KW-0560">Oxidoreductase</keyword>
<keyword id="KW-1185">Reference proteome</keyword>
<keyword id="KW-0735">Signal-anchor</keyword>
<keyword id="KW-0812">Transmembrane</keyword>
<keyword id="KW-1133">Transmembrane helix</keyword>
<keyword id="KW-0847">Vitamin C</keyword>
<accession>Q9D136</accession>